<sequence length="77" mass="8904">MARVCEVTGKGPMVGNKVSHANNRTKRRFLPNLQYRRFWVETENRWIRLRISNAGLRLIDKNGIDVVLADLRARGQA</sequence>
<reference key="1">
    <citation type="submission" date="2006-02" db="EMBL/GenBank/DDBJ databases">
        <title>Complete sequence of chromosome of Rhodoferax ferrireducens DSM 15236.</title>
        <authorList>
            <person name="Copeland A."/>
            <person name="Lucas S."/>
            <person name="Lapidus A."/>
            <person name="Barry K."/>
            <person name="Detter J.C."/>
            <person name="Glavina del Rio T."/>
            <person name="Hammon N."/>
            <person name="Israni S."/>
            <person name="Pitluck S."/>
            <person name="Brettin T."/>
            <person name="Bruce D."/>
            <person name="Han C."/>
            <person name="Tapia R."/>
            <person name="Gilna P."/>
            <person name="Kiss H."/>
            <person name="Schmutz J."/>
            <person name="Larimer F."/>
            <person name="Land M."/>
            <person name="Kyrpides N."/>
            <person name="Ivanova N."/>
            <person name="Richardson P."/>
        </authorList>
    </citation>
    <scope>NUCLEOTIDE SEQUENCE [LARGE SCALE GENOMIC DNA]</scope>
    <source>
        <strain>ATCC BAA-621 / DSM 15236 / T118</strain>
    </source>
</reference>
<protein>
    <recommendedName>
        <fullName evidence="1">Large ribosomal subunit protein bL28</fullName>
    </recommendedName>
    <alternativeName>
        <fullName evidence="2">50S ribosomal protein L28</fullName>
    </alternativeName>
</protein>
<comment type="similarity">
    <text evidence="1">Belongs to the bacterial ribosomal protein bL28 family.</text>
</comment>
<gene>
    <name evidence="1" type="primary">rpmB</name>
    <name type="ordered locus">Rfer_3180</name>
</gene>
<evidence type="ECO:0000255" key="1">
    <source>
        <dbReference type="HAMAP-Rule" id="MF_00373"/>
    </source>
</evidence>
<evidence type="ECO:0000305" key="2"/>
<accession>Q21TL4</accession>
<organism>
    <name type="scientific">Albidiferax ferrireducens (strain ATCC BAA-621 / DSM 15236 / T118)</name>
    <name type="common">Rhodoferax ferrireducens</name>
    <dbReference type="NCBI Taxonomy" id="338969"/>
    <lineage>
        <taxon>Bacteria</taxon>
        <taxon>Pseudomonadati</taxon>
        <taxon>Pseudomonadota</taxon>
        <taxon>Betaproteobacteria</taxon>
        <taxon>Burkholderiales</taxon>
        <taxon>Comamonadaceae</taxon>
        <taxon>Rhodoferax</taxon>
    </lineage>
</organism>
<keyword id="KW-1185">Reference proteome</keyword>
<keyword id="KW-0687">Ribonucleoprotein</keyword>
<keyword id="KW-0689">Ribosomal protein</keyword>
<dbReference type="EMBL" id="CP000267">
    <property type="protein sequence ID" value="ABD70889.1"/>
    <property type="molecule type" value="Genomic_DNA"/>
</dbReference>
<dbReference type="RefSeq" id="WP_011465452.1">
    <property type="nucleotide sequence ID" value="NC_007908.1"/>
</dbReference>
<dbReference type="SMR" id="Q21TL4"/>
<dbReference type="STRING" id="338969.Rfer_3180"/>
<dbReference type="KEGG" id="rfr:Rfer_3180"/>
<dbReference type="eggNOG" id="COG0227">
    <property type="taxonomic scope" value="Bacteria"/>
</dbReference>
<dbReference type="HOGENOM" id="CLU_064548_3_1_4"/>
<dbReference type="OrthoDB" id="9805609at2"/>
<dbReference type="Proteomes" id="UP000008332">
    <property type="component" value="Chromosome"/>
</dbReference>
<dbReference type="GO" id="GO:0022625">
    <property type="term" value="C:cytosolic large ribosomal subunit"/>
    <property type="evidence" value="ECO:0007669"/>
    <property type="project" value="TreeGrafter"/>
</dbReference>
<dbReference type="GO" id="GO:0003735">
    <property type="term" value="F:structural constituent of ribosome"/>
    <property type="evidence" value="ECO:0007669"/>
    <property type="project" value="InterPro"/>
</dbReference>
<dbReference type="GO" id="GO:0006412">
    <property type="term" value="P:translation"/>
    <property type="evidence" value="ECO:0007669"/>
    <property type="project" value="UniProtKB-UniRule"/>
</dbReference>
<dbReference type="FunFam" id="2.30.170.40:FF:000001">
    <property type="entry name" value="50S ribosomal protein L28"/>
    <property type="match status" value="1"/>
</dbReference>
<dbReference type="Gene3D" id="2.30.170.40">
    <property type="entry name" value="Ribosomal protein L28/L24"/>
    <property type="match status" value="1"/>
</dbReference>
<dbReference type="HAMAP" id="MF_00373">
    <property type="entry name" value="Ribosomal_bL28"/>
    <property type="match status" value="1"/>
</dbReference>
<dbReference type="InterPro" id="IPR026569">
    <property type="entry name" value="Ribosomal_bL28"/>
</dbReference>
<dbReference type="InterPro" id="IPR034704">
    <property type="entry name" value="Ribosomal_bL28/bL31-like_sf"/>
</dbReference>
<dbReference type="InterPro" id="IPR001383">
    <property type="entry name" value="Ribosomal_bL28_bact-type"/>
</dbReference>
<dbReference type="InterPro" id="IPR037147">
    <property type="entry name" value="Ribosomal_bL28_sf"/>
</dbReference>
<dbReference type="NCBIfam" id="TIGR00009">
    <property type="entry name" value="L28"/>
    <property type="match status" value="1"/>
</dbReference>
<dbReference type="PANTHER" id="PTHR13528">
    <property type="entry name" value="39S RIBOSOMAL PROTEIN L28, MITOCHONDRIAL"/>
    <property type="match status" value="1"/>
</dbReference>
<dbReference type="PANTHER" id="PTHR13528:SF2">
    <property type="entry name" value="LARGE RIBOSOMAL SUBUNIT PROTEIN BL28M"/>
    <property type="match status" value="1"/>
</dbReference>
<dbReference type="Pfam" id="PF00830">
    <property type="entry name" value="Ribosomal_L28"/>
    <property type="match status" value="1"/>
</dbReference>
<dbReference type="SUPFAM" id="SSF143800">
    <property type="entry name" value="L28p-like"/>
    <property type="match status" value="1"/>
</dbReference>
<proteinExistence type="inferred from homology"/>
<name>RL28_ALBFT</name>
<feature type="chain" id="PRO_1000007327" description="Large ribosomal subunit protein bL28">
    <location>
        <begin position="1"/>
        <end position="77"/>
    </location>
</feature>